<keyword id="KW-0238">DNA-binding</keyword>
<keyword id="KW-0479">Metal-binding</keyword>
<keyword id="KW-0539">Nucleus</keyword>
<keyword id="KW-1185">Reference proteome</keyword>
<keyword id="KW-0804">Transcription</keyword>
<keyword id="KW-0805">Transcription regulation</keyword>
<keyword id="KW-0843">Virulence</keyword>
<keyword id="KW-0862">Zinc</keyword>
<accession>Q5ANB1</accession>
<accession>A0A1D8PK50</accession>
<organism>
    <name type="scientific">Candida albicans (strain SC5314 / ATCC MYA-2876)</name>
    <name type="common">Yeast</name>
    <dbReference type="NCBI Taxonomy" id="237561"/>
    <lineage>
        <taxon>Eukaryota</taxon>
        <taxon>Fungi</taxon>
        <taxon>Dikarya</taxon>
        <taxon>Ascomycota</taxon>
        <taxon>Saccharomycotina</taxon>
        <taxon>Pichiomycetes</taxon>
        <taxon>Debaryomycetaceae</taxon>
        <taxon>Candida/Lodderomyces clade</taxon>
        <taxon>Candida</taxon>
    </lineage>
</organism>
<reference key="1">
    <citation type="journal article" date="2004" name="Proc. Natl. Acad. Sci. U.S.A.">
        <title>The diploid genome sequence of Candida albicans.</title>
        <authorList>
            <person name="Jones T."/>
            <person name="Federspiel N.A."/>
            <person name="Chibana H."/>
            <person name="Dungan J."/>
            <person name="Kalman S."/>
            <person name="Magee B.B."/>
            <person name="Newport G."/>
            <person name="Thorstenson Y.R."/>
            <person name="Agabian N."/>
            <person name="Magee P.T."/>
            <person name="Davis R.W."/>
            <person name="Scherer S."/>
        </authorList>
    </citation>
    <scope>NUCLEOTIDE SEQUENCE [LARGE SCALE GENOMIC DNA]</scope>
    <source>
        <strain>SC5314 / ATCC MYA-2876</strain>
    </source>
</reference>
<reference key="2">
    <citation type="journal article" date="2007" name="Genome Biol.">
        <title>Assembly of the Candida albicans genome into sixteen supercontigs aligned on the eight chromosomes.</title>
        <authorList>
            <person name="van het Hoog M."/>
            <person name="Rast T.J."/>
            <person name="Martchenko M."/>
            <person name="Grindle S."/>
            <person name="Dignard D."/>
            <person name="Hogues H."/>
            <person name="Cuomo C."/>
            <person name="Berriman M."/>
            <person name="Scherer S."/>
            <person name="Magee B.B."/>
            <person name="Whiteway M."/>
            <person name="Chibana H."/>
            <person name="Nantel A."/>
            <person name="Magee P.T."/>
        </authorList>
    </citation>
    <scope>GENOME REANNOTATION</scope>
    <source>
        <strain>SC5314 / ATCC MYA-2876</strain>
    </source>
</reference>
<reference key="3">
    <citation type="journal article" date="2013" name="Genome Biol.">
        <title>Assembly of a phased diploid Candida albicans genome facilitates allele-specific measurements and provides a simple model for repeat and indel structure.</title>
        <authorList>
            <person name="Muzzey D."/>
            <person name="Schwartz K."/>
            <person name="Weissman J.S."/>
            <person name="Sherlock G."/>
        </authorList>
    </citation>
    <scope>NUCLEOTIDE SEQUENCE [LARGE SCALE GENOMIC DNA]</scope>
    <scope>GENOME REANNOTATION</scope>
    <source>
        <strain>SC5314 / ATCC MYA-2876</strain>
    </source>
</reference>
<reference key="4">
    <citation type="journal article" date="2005" name="Comp. Funct. Genomics">
        <title>In silico analysis for transcription factors with Zn(II)(2)C(6) binuclear cluster DNA-binding domains in Candida albicans.</title>
        <authorList>
            <person name="Maicas S."/>
            <person name="Moreno I."/>
            <person name="Nieto A."/>
            <person name="Gomez M."/>
            <person name="Sentandreu R."/>
            <person name="Valentin E."/>
        </authorList>
    </citation>
    <scope>DNA-BINDING</scope>
</reference>
<reference key="5">
    <citation type="journal article" date="2007" name="PLoS Biol.">
        <title>Interlocking transcriptional feedback loops control white-opaque switching in Candida albicans.</title>
        <authorList>
            <person name="Zordan R.E."/>
            <person name="Miller M.G."/>
            <person name="Galgoczy D.J."/>
            <person name="Tuch B.B."/>
            <person name="Johnson A.D."/>
        </authorList>
    </citation>
    <scope>FUNCTION</scope>
</reference>
<reference key="6">
    <citation type="journal article" date="2010" name="Mol. Microbiol.">
        <title>Temporal anatomy of an epigenetic switch in cell programming: the white-opaque transition of C. albicans.</title>
        <authorList>
            <person name="Lohse M.B."/>
            <person name="Johnson A.D."/>
        </authorList>
    </citation>
    <scope>FUNCTION</scope>
</reference>
<reference key="7">
    <citation type="journal article" date="2011" name="J. Biol. Chem.">
        <title>Cap2-HAP complex is a critical transcriptional regulator that has dual but contrasting roles in regulation of iron homeostasis in Candida albicans.</title>
        <authorList>
            <person name="Singh R.P."/>
            <person name="Prasad H.K."/>
            <person name="Sinha I."/>
            <person name="Agarwal N."/>
            <person name="Natarajan K."/>
        </authorList>
    </citation>
    <scope>INDUCTION</scope>
</reference>
<reference key="8">
    <citation type="journal article" date="2012" name="Mol. Biol. Cell">
        <title>The transcription factor Flo8 mediates CO2 sensing in the human fungal pathogen Candida albicans.</title>
        <authorList>
            <person name="Du H."/>
            <person name="Guan G."/>
            <person name="Xie J."/>
            <person name="Cottier F."/>
            <person name="Sun Y."/>
            <person name="Jia W."/>
            <person name="Muhlschlegel F.A."/>
            <person name="Huang G."/>
        </authorList>
    </citation>
    <scope>FUNCTION</scope>
</reference>
<evidence type="ECO:0000255" key="1">
    <source>
        <dbReference type="PROSITE-ProRule" id="PRU00227"/>
    </source>
</evidence>
<evidence type="ECO:0000256" key="2">
    <source>
        <dbReference type="SAM" id="MobiDB-lite"/>
    </source>
</evidence>
<evidence type="ECO:0000269" key="3">
    <source>
    </source>
</evidence>
<evidence type="ECO:0000269" key="4">
    <source>
    </source>
</evidence>
<evidence type="ECO:0000269" key="5">
    <source>
    </source>
</evidence>
<evidence type="ECO:0000269" key="6">
    <source>
    </source>
</evidence>
<evidence type="ECO:0000305" key="7"/>
<sequence length="446" mass="49106">MTQLPSVSELINRTGSIGSSSNITRVPPMTTTSATNTTTAATATTVTSTTPRSENSYSPNSPYSLPTRPSNTSLTNYSAGSGITVASSSFQFSQPSPGRSKHNSTSSQSSSGDSFQQHQSNPSGVSMSSNTSPRTSIVQSMSSVPTPPSTGPAPQQFVYQESQLPVQPPPQQQQLQQPPPPPPQQQQHIYPQQQPNFPYHNNFVSPPTYTTAYPQYYYQPVMTPPHHQPHQQAPIHLANNVSILQSQAVMQNAYPTTHYLQHVGPHHIYANVNSQVYYQDMAREEANKALINKRRIIKRRTRTGCLTCRKRRIKCDERKPTCFNCERSKKSCLGYQDLSKLPPRKRNRDTSLDLPDGNQQQQQQQQNQQSIVGGAGNVSDEPHNETHQITSISGSSTNSRNLDMMIPQSFRNNISSQPINFYGPVATTASGASAVINRVSVADLLK</sequence>
<feature type="chain" id="PRO_0000420155" description="White-opaque regulator 2">
    <location>
        <begin position="1"/>
        <end position="446"/>
    </location>
</feature>
<feature type="DNA-binding region" description="Zn(2)-C6 fungal-type" evidence="1">
    <location>
        <begin position="305"/>
        <end position="332"/>
    </location>
</feature>
<feature type="region of interest" description="Disordered" evidence="2">
    <location>
        <begin position="1"/>
        <end position="203"/>
    </location>
</feature>
<feature type="region of interest" description="Disordered" evidence="2">
    <location>
        <begin position="336"/>
        <end position="402"/>
    </location>
</feature>
<feature type="compositionally biased region" description="Polar residues" evidence="2">
    <location>
        <begin position="1"/>
        <end position="24"/>
    </location>
</feature>
<feature type="compositionally biased region" description="Low complexity" evidence="2">
    <location>
        <begin position="30"/>
        <end position="64"/>
    </location>
</feature>
<feature type="compositionally biased region" description="Polar residues" evidence="2">
    <location>
        <begin position="67"/>
        <end position="86"/>
    </location>
</feature>
<feature type="compositionally biased region" description="Low complexity" evidence="2">
    <location>
        <begin position="87"/>
        <end position="97"/>
    </location>
</feature>
<feature type="compositionally biased region" description="Low complexity" evidence="2">
    <location>
        <begin position="104"/>
        <end position="120"/>
    </location>
</feature>
<feature type="compositionally biased region" description="Polar residues" evidence="2">
    <location>
        <begin position="121"/>
        <end position="144"/>
    </location>
</feature>
<feature type="compositionally biased region" description="Pro residues" evidence="2">
    <location>
        <begin position="166"/>
        <end position="184"/>
    </location>
</feature>
<feature type="compositionally biased region" description="Low complexity" evidence="2">
    <location>
        <begin position="185"/>
        <end position="195"/>
    </location>
</feature>
<feature type="compositionally biased region" description="Low complexity" evidence="2">
    <location>
        <begin position="358"/>
        <end position="369"/>
    </location>
</feature>
<feature type="compositionally biased region" description="Polar residues" evidence="2">
    <location>
        <begin position="387"/>
        <end position="401"/>
    </location>
</feature>
<dbReference type="EMBL" id="CP017625">
    <property type="protein sequence ID" value="AOW28532.1"/>
    <property type="molecule type" value="Genomic_DNA"/>
</dbReference>
<dbReference type="RefSeq" id="XP_723202.1">
    <property type="nucleotide sequence ID" value="XM_718109.1"/>
</dbReference>
<dbReference type="SMR" id="Q5ANB1"/>
<dbReference type="BioGRID" id="1218324">
    <property type="interactions" value="1"/>
</dbReference>
<dbReference type="STRING" id="237561.Q5ANB1"/>
<dbReference type="EnsemblFungi" id="C3_05170W_A-T">
    <property type="protein sequence ID" value="C3_05170W_A-T-p1"/>
    <property type="gene ID" value="C3_05170W_A"/>
</dbReference>
<dbReference type="GeneID" id="3635230"/>
<dbReference type="KEGG" id="cal:CAALFM_C305170WA"/>
<dbReference type="CGD" id="CAL0000177394">
    <property type="gene designation" value="WOR2"/>
</dbReference>
<dbReference type="VEuPathDB" id="FungiDB:C3_05170W_A"/>
<dbReference type="HOGENOM" id="CLU_613927_0_0_1"/>
<dbReference type="InParanoid" id="Q5ANB1"/>
<dbReference type="OMA" id="NCSRMGI"/>
<dbReference type="OrthoDB" id="3598904at2759"/>
<dbReference type="PRO" id="PR:Q5ANB1"/>
<dbReference type="Proteomes" id="UP000000559">
    <property type="component" value="Chromosome 3"/>
</dbReference>
<dbReference type="GO" id="GO:0005634">
    <property type="term" value="C:nucleus"/>
    <property type="evidence" value="ECO:0007669"/>
    <property type="project" value="UniProtKB-SubCell"/>
</dbReference>
<dbReference type="GO" id="GO:0003677">
    <property type="term" value="F:DNA binding"/>
    <property type="evidence" value="ECO:0007669"/>
    <property type="project" value="UniProtKB-KW"/>
</dbReference>
<dbReference type="GO" id="GO:0000981">
    <property type="term" value="F:DNA-binding transcription factor activity, RNA polymerase II-specific"/>
    <property type="evidence" value="ECO:0007669"/>
    <property type="project" value="InterPro"/>
</dbReference>
<dbReference type="GO" id="GO:0008270">
    <property type="term" value="F:zinc ion binding"/>
    <property type="evidence" value="ECO:0007669"/>
    <property type="project" value="InterPro"/>
</dbReference>
<dbReference type="GO" id="GO:0044403">
    <property type="term" value="P:biological process involved in symbiotic interaction"/>
    <property type="evidence" value="ECO:0000315"/>
    <property type="project" value="CGD"/>
</dbReference>
<dbReference type="GO" id="GO:0030447">
    <property type="term" value="P:filamentous growth"/>
    <property type="evidence" value="ECO:0000315"/>
    <property type="project" value="CGD"/>
</dbReference>
<dbReference type="GO" id="GO:0070783">
    <property type="term" value="P:growth of unicellular organism as a thread of attached cells"/>
    <property type="evidence" value="ECO:0000315"/>
    <property type="project" value="CGD"/>
</dbReference>
<dbReference type="GO" id="GO:0007618">
    <property type="term" value="P:mating"/>
    <property type="evidence" value="ECO:0000315"/>
    <property type="project" value="CGD"/>
</dbReference>
<dbReference type="GO" id="GO:0070785">
    <property type="term" value="P:negative regulation of growth of unicellular organism as a thread of attached cells"/>
    <property type="evidence" value="ECO:0000315"/>
    <property type="project" value="CGD"/>
</dbReference>
<dbReference type="GO" id="GO:0036166">
    <property type="term" value="P:phenotypic switching"/>
    <property type="evidence" value="ECO:0000315"/>
    <property type="project" value="CGD"/>
</dbReference>
<dbReference type="GO" id="GO:1900241">
    <property type="term" value="P:positive regulation of phenotypic switching"/>
    <property type="evidence" value="ECO:0000315"/>
    <property type="project" value="CGD"/>
</dbReference>
<dbReference type="CDD" id="cd00067">
    <property type="entry name" value="GAL4"/>
    <property type="match status" value="1"/>
</dbReference>
<dbReference type="FunFam" id="4.10.240.10:FF:000075">
    <property type="entry name" value="Transcriptional regulatory protein moc3"/>
    <property type="match status" value="1"/>
</dbReference>
<dbReference type="Gene3D" id="4.10.240.10">
    <property type="entry name" value="Zn(2)-C6 fungal-type DNA-binding domain"/>
    <property type="match status" value="1"/>
</dbReference>
<dbReference type="InterPro" id="IPR052360">
    <property type="entry name" value="Transcr_Regulatory_Proteins"/>
</dbReference>
<dbReference type="InterPro" id="IPR036864">
    <property type="entry name" value="Zn2-C6_fun-type_DNA-bd_sf"/>
</dbReference>
<dbReference type="InterPro" id="IPR001138">
    <property type="entry name" value="Zn2Cys6_DnaBD"/>
</dbReference>
<dbReference type="PANTHER" id="PTHR36206">
    <property type="entry name" value="ASPERCRYPTIN BIOSYNTHESIS CLUSTER-SPECIFIC TRANSCRIPTION REGULATOR ATNN-RELATED"/>
    <property type="match status" value="1"/>
</dbReference>
<dbReference type="PANTHER" id="PTHR36206:SF13">
    <property type="entry name" value="TRANSCRIPTIONAL REGULATORY PROTEIN MOC3"/>
    <property type="match status" value="1"/>
</dbReference>
<dbReference type="Pfam" id="PF00172">
    <property type="entry name" value="Zn_clus"/>
    <property type="match status" value="1"/>
</dbReference>
<dbReference type="SMART" id="SM00066">
    <property type="entry name" value="GAL4"/>
    <property type="match status" value="1"/>
</dbReference>
<dbReference type="SUPFAM" id="SSF57701">
    <property type="entry name" value="Zn2/Cys6 DNA-binding domain"/>
    <property type="match status" value="1"/>
</dbReference>
<dbReference type="PROSITE" id="PS00463">
    <property type="entry name" value="ZN2_CY6_FUNGAL_1"/>
    <property type="match status" value="1"/>
</dbReference>
<dbReference type="PROSITE" id="PS50048">
    <property type="entry name" value="ZN2_CY6_FUNGAL_2"/>
    <property type="match status" value="1"/>
</dbReference>
<gene>
    <name type="primary">WOR2</name>
    <name type="ordered locus">CAALFM_C305170WA</name>
    <name type="ORF">CaO19.13413</name>
    <name type="ORF">CaO19.5992</name>
</gene>
<comment type="function">
    <text evidence="3 4 6">Transcriptional regulator of the switch between 2 heritable states, the white and opaque states. These 2 cell types differ in many characteristics, including cell structure, mating competence, and virulence. Each state is heritable for many generations, and switching between states occurs stochastically, at low frequency. WOR2 is necessary for the stability of the opaque state phenotypic switching from the white to the opaque phase is a necessary step for mating. Plays a role in cell adhesion and pseudohyphal growth.</text>
</comment>
<comment type="subcellular location">
    <subcellularLocation>
        <location evidence="7">Nucleus</location>
    </subcellularLocation>
</comment>
<comment type="induction">
    <text evidence="5">Expression is induced by HAP43 under low iron conditions.</text>
</comment>
<protein>
    <recommendedName>
        <fullName>White-opaque regulator 2</fullName>
    </recommendedName>
</protein>
<name>WOR2_CANAL</name>
<proteinExistence type="evidence at protein level"/>